<protein>
    <recommendedName>
        <fullName evidence="1">Putative transport protein VP1232</fullName>
    </recommendedName>
</protein>
<proteinExistence type="inferred from homology"/>
<reference key="1">
    <citation type="journal article" date="2003" name="Lancet">
        <title>Genome sequence of Vibrio parahaemolyticus: a pathogenic mechanism distinct from that of V. cholerae.</title>
        <authorList>
            <person name="Makino K."/>
            <person name="Oshima K."/>
            <person name="Kurokawa K."/>
            <person name="Yokoyama K."/>
            <person name="Uda T."/>
            <person name="Tagomori K."/>
            <person name="Iijima Y."/>
            <person name="Najima M."/>
            <person name="Nakano M."/>
            <person name="Yamashita A."/>
            <person name="Kubota Y."/>
            <person name="Kimura S."/>
            <person name="Yasunaga T."/>
            <person name="Honda T."/>
            <person name="Shinagawa H."/>
            <person name="Hattori M."/>
            <person name="Iida T."/>
        </authorList>
    </citation>
    <scope>NUCLEOTIDE SEQUENCE [LARGE SCALE GENOMIC DNA]</scope>
    <source>
        <strain>RIMD 2210633</strain>
    </source>
</reference>
<evidence type="ECO:0000255" key="1">
    <source>
        <dbReference type="HAMAP-Rule" id="MF_01015"/>
    </source>
</evidence>
<comment type="subcellular location">
    <subcellularLocation>
        <location evidence="1">Cell membrane</location>
        <topology evidence="1">Multi-pass membrane protein</topology>
    </subcellularLocation>
</comment>
<comment type="similarity">
    <text evidence="1">Belongs to the AAE transporter (TC 2.A.81) family. YbjL subfamily.</text>
</comment>
<organism>
    <name type="scientific">Vibrio parahaemolyticus serotype O3:K6 (strain RIMD 2210633)</name>
    <dbReference type="NCBI Taxonomy" id="223926"/>
    <lineage>
        <taxon>Bacteria</taxon>
        <taxon>Pseudomonadati</taxon>
        <taxon>Pseudomonadota</taxon>
        <taxon>Gammaproteobacteria</taxon>
        <taxon>Vibrionales</taxon>
        <taxon>Vibrionaceae</taxon>
        <taxon>Vibrio</taxon>
    </lineage>
</organism>
<sequence>MNIDVVQLLDQNPILLIFVVLAIGLAIGKIRFGNLQLGNSIGVLITSLIMGHLGFSFNAEALTIGFMLFIYCVGIEAGPNFFGIFFRDGKHYFILSMTVLVAAVSLTYGLSHYFGLDFGLSAGMMAGALTATPVLVGAQDALNSGLATIPRNMDFSLVLENLSVGYAMAYLIGLISMIMFAKLLPKLQKQNLSDSAQQIAQERGLGNSSQRKVYLPIIRAYRVGPELIDWTDGKNLRELGIYRQTGCYIERIRRNGILAHPDGDAILQEGDEIALVGFPDSHARLDPSFRNGKEVFDRNLLDLRIVEEEIVVKSDAIAGKRLSDLNLSEFGCFLNRVVRAQIEMPMDLDIVLAKGDVLQVSGEKSRVHGLAEKIGFISIHSQMADLLAFCSFFILGIMFGLVTMTFGQVSFSLGNAVGLLLSGITLGFLRANHPTFGYVPQGALNMVKDLGLMFFMVGIGLSAGGKMFEHLTQVGPQVIGLAFIVSVVPVVIAYLVGAYILKMNRALLFGAIIGARTCAPAMDVVNEYAKSTIPALGYAGTYAIANILMTLAGTILIILS</sequence>
<gene>
    <name type="ordered locus">VP1232</name>
</gene>
<name>Y1232_VIBPA</name>
<accession>Q87QB8</accession>
<dbReference type="EMBL" id="BA000031">
    <property type="protein sequence ID" value="BAC59495.1"/>
    <property type="molecule type" value="Genomic_DNA"/>
</dbReference>
<dbReference type="RefSeq" id="NP_797611.1">
    <property type="nucleotide sequence ID" value="NC_004603.1"/>
</dbReference>
<dbReference type="RefSeq" id="WP_005483552.1">
    <property type="nucleotide sequence ID" value="NC_004603.1"/>
</dbReference>
<dbReference type="SMR" id="Q87QB8"/>
<dbReference type="GeneID" id="1188737"/>
<dbReference type="KEGG" id="vpa:VP1232"/>
<dbReference type="PATRIC" id="fig|223926.6.peg.1172"/>
<dbReference type="eggNOG" id="COG2985">
    <property type="taxonomic scope" value="Bacteria"/>
</dbReference>
<dbReference type="eggNOG" id="COG3273">
    <property type="taxonomic scope" value="Bacteria"/>
</dbReference>
<dbReference type="HOGENOM" id="CLU_035023_2_2_6"/>
<dbReference type="Proteomes" id="UP000002493">
    <property type="component" value="Chromosome 1"/>
</dbReference>
<dbReference type="GO" id="GO:0005886">
    <property type="term" value="C:plasma membrane"/>
    <property type="evidence" value="ECO:0007669"/>
    <property type="project" value="UniProtKB-SubCell"/>
</dbReference>
<dbReference type="GO" id="GO:0008324">
    <property type="term" value="F:monoatomic cation transmembrane transporter activity"/>
    <property type="evidence" value="ECO:0007669"/>
    <property type="project" value="InterPro"/>
</dbReference>
<dbReference type="GO" id="GO:0006813">
    <property type="term" value="P:potassium ion transport"/>
    <property type="evidence" value="ECO:0007669"/>
    <property type="project" value="InterPro"/>
</dbReference>
<dbReference type="Gene3D" id="3.30.70.1450">
    <property type="entry name" value="Regulator of K+ conductance, C-terminal domain"/>
    <property type="match status" value="2"/>
</dbReference>
<dbReference type="HAMAP" id="MF_01015">
    <property type="entry name" value="YbjL"/>
    <property type="match status" value="1"/>
</dbReference>
<dbReference type="InterPro" id="IPR050144">
    <property type="entry name" value="AAE_transporter"/>
</dbReference>
<dbReference type="InterPro" id="IPR006037">
    <property type="entry name" value="RCK_C"/>
</dbReference>
<dbReference type="InterPro" id="IPR036721">
    <property type="entry name" value="RCK_C_sf"/>
</dbReference>
<dbReference type="InterPro" id="IPR023017">
    <property type="entry name" value="Transp_YbjL_put"/>
</dbReference>
<dbReference type="InterPro" id="IPR006512">
    <property type="entry name" value="YidE_YbjL"/>
</dbReference>
<dbReference type="NCBIfam" id="NF003440">
    <property type="entry name" value="PRK04972.1"/>
    <property type="match status" value="1"/>
</dbReference>
<dbReference type="NCBIfam" id="TIGR01625">
    <property type="entry name" value="YidE_YbjL_dupl"/>
    <property type="match status" value="2"/>
</dbReference>
<dbReference type="PANTHER" id="PTHR30445">
    <property type="entry name" value="K(+)_H(+) ANTIPORTER SUBUNIT KHTT"/>
    <property type="match status" value="1"/>
</dbReference>
<dbReference type="PANTHER" id="PTHR30445:SF10">
    <property type="entry name" value="TRANSPORT PROTEIN YBJL-RELATED"/>
    <property type="match status" value="1"/>
</dbReference>
<dbReference type="Pfam" id="PF06826">
    <property type="entry name" value="Asp-Al_Ex"/>
    <property type="match status" value="2"/>
</dbReference>
<dbReference type="Pfam" id="PF02080">
    <property type="entry name" value="TrkA_C"/>
    <property type="match status" value="2"/>
</dbReference>
<dbReference type="SUPFAM" id="SSF116726">
    <property type="entry name" value="TrkA C-terminal domain-like"/>
    <property type="match status" value="2"/>
</dbReference>
<dbReference type="PROSITE" id="PS51202">
    <property type="entry name" value="RCK_C"/>
    <property type="match status" value="2"/>
</dbReference>
<keyword id="KW-1003">Cell membrane</keyword>
<keyword id="KW-0472">Membrane</keyword>
<keyword id="KW-0677">Repeat</keyword>
<keyword id="KW-0812">Transmembrane</keyword>
<keyword id="KW-1133">Transmembrane helix</keyword>
<keyword id="KW-0813">Transport</keyword>
<feature type="chain" id="PRO_0000208792" description="Putative transport protein VP1232">
    <location>
        <begin position="1"/>
        <end position="560"/>
    </location>
</feature>
<feature type="transmembrane region" description="Helical" evidence="1">
    <location>
        <begin position="8"/>
        <end position="28"/>
    </location>
</feature>
<feature type="transmembrane region" description="Helical" evidence="1">
    <location>
        <begin position="37"/>
        <end position="57"/>
    </location>
</feature>
<feature type="transmembrane region" description="Helical" evidence="1">
    <location>
        <begin position="66"/>
        <end position="86"/>
    </location>
</feature>
<feature type="transmembrane region" description="Helical" evidence="1">
    <location>
        <begin position="91"/>
        <end position="111"/>
    </location>
</feature>
<feature type="transmembrane region" description="Helical" evidence="1">
    <location>
        <begin position="164"/>
        <end position="184"/>
    </location>
</feature>
<feature type="transmembrane region" description="Helical" evidence="1">
    <location>
        <begin position="386"/>
        <end position="406"/>
    </location>
</feature>
<feature type="transmembrane region" description="Helical" evidence="1">
    <location>
        <begin position="409"/>
        <end position="429"/>
    </location>
</feature>
<feature type="transmembrane region" description="Helical" evidence="1">
    <location>
        <begin position="443"/>
        <end position="463"/>
    </location>
</feature>
<feature type="transmembrane region" description="Helical" evidence="1">
    <location>
        <begin position="478"/>
        <end position="498"/>
    </location>
</feature>
<feature type="transmembrane region" description="Helical" evidence="1">
    <location>
        <begin position="506"/>
        <end position="526"/>
    </location>
</feature>
<feature type="transmembrane region" description="Helical" evidence="1">
    <location>
        <begin position="539"/>
        <end position="559"/>
    </location>
</feature>
<feature type="domain" description="RCK C-terminal 1" evidence="1">
    <location>
        <begin position="205"/>
        <end position="292"/>
    </location>
</feature>
<feature type="domain" description="RCK C-terminal 2" evidence="1">
    <location>
        <begin position="293"/>
        <end position="376"/>
    </location>
</feature>